<keyword id="KW-0963">Cytoplasm</keyword>
<keyword id="KW-0238">DNA-binding</keyword>
<keyword id="KW-1185">Reference proteome</keyword>
<keyword id="KW-0731">Sigma factor</keyword>
<keyword id="KW-0804">Transcription</keyword>
<keyword id="KW-0805">Transcription regulation</keyword>
<organism>
    <name type="scientific">Buchnera aphidicola subsp. Baizongia pistaciae (strain Bp)</name>
    <dbReference type="NCBI Taxonomy" id="224915"/>
    <lineage>
        <taxon>Bacteria</taxon>
        <taxon>Pseudomonadati</taxon>
        <taxon>Pseudomonadota</taxon>
        <taxon>Gammaproteobacteria</taxon>
        <taxon>Enterobacterales</taxon>
        <taxon>Erwiniaceae</taxon>
        <taxon>Buchnera</taxon>
    </lineage>
</organism>
<protein>
    <recommendedName>
        <fullName evidence="1">RNA polymerase sigma factor RpoD</fullName>
    </recommendedName>
    <alternativeName>
        <fullName evidence="1">Sigma-70</fullName>
    </alternativeName>
</protein>
<feature type="chain" id="PRO_0000093879" description="RNA polymerase sigma factor RpoD">
    <location>
        <begin position="1"/>
        <end position="609"/>
    </location>
</feature>
<feature type="DNA-binding region" description="H-T-H motif" evidence="1">
    <location>
        <begin position="569"/>
        <end position="588"/>
    </location>
</feature>
<feature type="region of interest" description="Sigma-70 factor domain-2" evidence="1">
    <location>
        <begin position="375"/>
        <end position="445"/>
    </location>
</feature>
<feature type="region of interest" description="Sigma-70 factor domain-3" evidence="1">
    <location>
        <begin position="454"/>
        <end position="530"/>
    </location>
</feature>
<feature type="region of interest" description="Sigma-70 factor domain-4" evidence="1">
    <location>
        <begin position="543"/>
        <end position="596"/>
    </location>
</feature>
<feature type="short sequence motif" description="Interaction with polymerase core subunit RpoC">
    <location>
        <begin position="399"/>
        <end position="402"/>
    </location>
</feature>
<comment type="function">
    <text evidence="1">Sigma factors are initiation factors that promote the attachment of RNA polymerase to specific initiation sites and are then released. This sigma factor is the primary sigma factor during exponential growth.</text>
</comment>
<comment type="subunit">
    <text evidence="1">Interacts transiently with the RNA polymerase catalytic core.</text>
</comment>
<comment type="subcellular location">
    <subcellularLocation>
        <location evidence="1">Cytoplasm</location>
    </subcellularLocation>
</comment>
<comment type="similarity">
    <text evidence="1">Belongs to the sigma-70 factor family. RpoD/SigA subfamily.</text>
</comment>
<proteinExistence type="inferred from homology"/>
<reference key="1">
    <citation type="journal article" date="2003" name="Proc. Natl. Acad. Sci. U.S.A.">
        <title>Reductive genome evolution in Buchnera aphidicola.</title>
        <authorList>
            <person name="van Ham R.C.H.J."/>
            <person name="Kamerbeek J."/>
            <person name="Palacios C."/>
            <person name="Rausell C."/>
            <person name="Abascal F."/>
            <person name="Bastolla U."/>
            <person name="Fernandez J.M."/>
            <person name="Jimenez L."/>
            <person name="Postigo M."/>
            <person name="Silva F.J."/>
            <person name="Tamames J."/>
            <person name="Viguera E."/>
            <person name="Latorre A."/>
            <person name="Valencia A."/>
            <person name="Moran F."/>
            <person name="Moya A."/>
        </authorList>
    </citation>
    <scope>NUCLEOTIDE SEQUENCE [LARGE SCALE GENOMIC DNA]</scope>
    <source>
        <strain>Bp</strain>
    </source>
</reference>
<gene>
    <name evidence="1" type="primary">rpoD</name>
    <name type="ordered locus">bbp_052</name>
</gene>
<dbReference type="EMBL" id="AE016826">
    <property type="protein sequence ID" value="AAO26791.1"/>
    <property type="molecule type" value="Genomic_DNA"/>
</dbReference>
<dbReference type="RefSeq" id="WP_011091192.1">
    <property type="nucleotide sequence ID" value="NC_004545.1"/>
</dbReference>
<dbReference type="SMR" id="Q89B10"/>
<dbReference type="STRING" id="224915.bbp_052"/>
<dbReference type="KEGG" id="bab:bbp_052"/>
<dbReference type="eggNOG" id="COG0568">
    <property type="taxonomic scope" value="Bacteria"/>
</dbReference>
<dbReference type="HOGENOM" id="CLU_014793_7_0_6"/>
<dbReference type="OrthoDB" id="9809557at2"/>
<dbReference type="Proteomes" id="UP000000601">
    <property type="component" value="Chromosome"/>
</dbReference>
<dbReference type="GO" id="GO:0005737">
    <property type="term" value="C:cytoplasm"/>
    <property type="evidence" value="ECO:0007669"/>
    <property type="project" value="UniProtKB-SubCell"/>
</dbReference>
<dbReference type="GO" id="GO:0003677">
    <property type="term" value="F:DNA binding"/>
    <property type="evidence" value="ECO:0007669"/>
    <property type="project" value="UniProtKB-UniRule"/>
</dbReference>
<dbReference type="GO" id="GO:0016987">
    <property type="term" value="F:sigma factor activity"/>
    <property type="evidence" value="ECO:0007669"/>
    <property type="project" value="UniProtKB-UniRule"/>
</dbReference>
<dbReference type="GO" id="GO:0006352">
    <property type="term" value="P:DNA-templated transcription initiation"/>
    <property type="evidence" value="ECO:0007669"/>
    <property type="project" value="UniProtKB-UniRule"/>
</dbReference>
<dbReference type="CDD" id="cd06171">
    <property type="entry name" value="Sigma70_r4"/>
    <property type="match status" value="1"/>
</dbReference>
<dbReference type="FunFam" id="1.10.220.120:FF:000001">
    <property type="entry name" value="RNA polymerase sigma factor RpoD"/>
    <property type="match status" value="1"/>
</dbReference>
<dbReference type="FunFam" id="1.10.601.10:FF:000002">
    <property type="entry name" value="RNA polymerase sigma factor RpoD"/>
    <property type="match status" value="1"/>
</dbReference>
<dbReference type="FunFam" id="1.10.10.10:FF:000002">
    <property type="entry name" value="RNA polymerase sigma factor SigA"/>
    <property type="match status" value="1"/>
</dbReference>
<dbReference type="FunFam" id="1.10.10.10:FF:000004">
    <property type="entry name" value="RNA polymerase sigma factor SigA"/>
    <property type="match status" value="1"/>
</dbReference>
<dbReference type="Gene3D" id="1.10.601.10">
    <property type="entry name" value="RNA Polymerase Primary Sigma Factor"/>
    <property type="match status" value="1"/>
</dbReference>
<dbReference type="Gene3D" id="1.10.220.120">
    <property type="entry name" value="Sigma-70 factor, region 1.1"/>
    <property type="match status" value="1"/>
</dbReference>
<dbReference type="Gene3D" id="1.10.10.10">
    <property type="entry name" value="Winged helix-like DNA-binding domain superfamily/Winged helix DNA-binding domain"/>
    <property type="match status" value="2"/>
</dbReference>
<dbReference type="HAMAP" id="MF_00963">
    <property type="entry name" value="Sigma70_RpoD_SigA"/>
    <property type="match status" value="1"/>
</dbReference>
<dbReference type="InterPro" id="IPR014284">
    <property type="entry name" value="RNA_pol_sigma-70_dom"/>
</dbReference>
<dbReference type="InterPro" id="IPR000943">
    <property type="entry name" value="RNA_pol_sigma70"/>
</dbReference>
<dbReference type="InterPro" id="IPR009042">
    <property type="entry name" value="RNA_pol_sigma70_r1_2"/>
</dbReference>
<dbReference type="InterPro" id="IPR007627">
    <property type="entry name" value="RNA_pol_sigma70_r2"/>
</dbReference>
<dbReference type="InterPro" id="IPR007624">
    <property type="entry name" value="RNA_pol_sigma70_r3"/>
</dbReference>
<dbReference type="InterPro" id="IPR007630">
    <property type="entry name" value="RNA_pol_sigma70_r4"/>
</dbReference>
<dbReference type="InterPro" id="IPR007631">
    <property type="entry name" value="RNA_pol_sigma_70_non-ess"/>
</dbReference>
<dbReference type="InterPro" id="IPR007127">
    <property type="entry name" value="RNA_pol_sigma_70_r1_1"/>
</dbReference>
<dbReference type="InterPro" id="IPR042189">
    <property type="entry name" value="RNA_pol_sigma_70_r1_1_sf"/>
</dbReference>
<dbReference type="InterPro" id="IPR013325">
    <property type="entry name" value="RNA_pol_sigma_r2"/>
</dbReference>
<dbReference type="InterPro" id="IPR013324">
    <property type="entry name" value="RNA_pol_sigma_r3/r4-like"/>
</dbReference>
<dbReference type="InterPro" id="IPR012760">
    <property type="entry name" value="RNA_pol_sigma_RpoD_C"/>
</dbReference>
<dbReference type="InterPro" id="IPR050239">
    <property type="entry name" value="Sigma-70_RNA_pol_init_factors"/>
</dbReference>
<dbReference type="InterPro" id="IPR028630">
    <property type="entry name" value="Sigma70_RpoD"/>
</dbReference>
<dbReference type="InterPro" id="IPR036388">
    <property type="entry name" value="WH-like_DNA-bd_sf"/>
</dbReference>
<dbReference type="NCBIfam" id="NF004208">
    <property type="entry name" value="PRK05658.1"/>
    <property type="match status" value="1"/>
</dbReference>
<dbReference type="NCBIfam" id="TIGR02393">
    <property type="entry name" value="RpoD_Cterm"/>
    <property type="match status" value="1"/>
</dbReference>
<dbReference type="NCBIfam" id="TIGR02937">
    <property type="entry name" value="sigma70-ECF"/>
    <property type="match status" value="1"/>
</dbReference>
<dbReference type="PANTHER" id="PTHR30603">
    <property type="entry name" value="RNA POLYMERASE SIGMA FACTOR RPO"/>
    <property type="match status" value="1"/>
</dbReference>
<dbReference type="PANTHER" id="PTHR30603:SF60">
    <property type="entry name" value="RNA POLYMERASE SIGMA FACTOR RPOD"/>
    <property type="match status" value="1"/>
</dbReference>
<dbReference type="Pfam" id="PF04546">
    <property type="entry name" value="Sigma70_ner"/>
    <property type="match status" value="1"/>
</dbReference>
<dbReference type="Pfam" id="PF03979">
    <property type="entry name" value="Sigma70_r1_1"/>
    <property type="match status" value="1"/>
</dbReference>
<dbReference type="Pfam" id="PF00140">
    <property type="entry name" value="Sigma70_r1_2"/>
    <property type="match status" value="1"/>
</dbReference>
<dbReference type="Pfam" id="PF04542">
    <property type="entry name" value="Sigma70_r2"/>
    <property type="match status" value="1"/>
</dbReference>
<dbReference type="Pfam" id="PF04539">
    <property type="entry name" value="Sigma70_r3"/>
    <property type="match status" value="1"/>
</dbReference>
<dbReference type="Pfam" id="PF04545">
    <property type="entry name" value="Sigma70_r4"/>
    <property type="match status" value="1"/>
</dbReference>
<dbReference type="PRINTS" id="PR00046">
    <property type="entry name" value="SIGMA70FCT"/>
</dbReference>
<dbReference type="SUPFAM" id="SSF88946">
    <property type="entry name" value="Sigma2 domain of RNA polymerase sigma factors"/>
    <property type="match status" value="1"/>
</dbReference>
<dbReference type="SUPFAM" id="SSF88659">
    <property type="entry name" value="Sigma3 and sigma4 domains of RNA polymerase sigma factors"/>
    <property type="match status" value="2"/>
</dbReference>
<dbReference type="PROSITE" id="PS00715">
    <property type="entry name" value="SIGMA70_1"/>
    <property type="match status" value="1"/>
</dbReference>
<dbReference type="PROSITE" id="PS00716">
    <property type="entry name" value="SIGMA70_2"/>
    <property type="match status" value="1"/>
</dbReference>
<accession>Q89B10</accession>
<name>RPOD_BUCBP</name>
<evidence type="ECO:0000255" key="1">
    <source>
        <dbReference type="HAMAP-Rule" id="MF_00963"/>
    </source>
</evidence>
<sequence>MEQNPQSQLKLLVTYGKEQGYLTYSEINDHLSDNIINSDQIEDIIQMINDMGIQVVEKAPDSDDLILHEIKRNNETDEDIVEATAQVLSTVESELGRTTDPVRMYMREMGTVELLTREGEIDIAKRIEDGINQVQCSVAEYPEAITHLLEQYNRVELGELRLSELIHGFVDPNAEAVHTSITNHINTNSEEHHHNDNTEENNDDDHLVDPELAREKFIALKNQYHITNYAIKTKNRNHQDTLIEINNLSEIFKQFRLVPKQFDHLVINMRKMMQKIRIQERNIAKLCIEYGNIPKKALLNFFSLQKTNQIWSKIVQNIKKPWIDKFNTIKPDIQMILKKLQKVEEETGLTIHQVKNINKRISLGEAKAKRAKKEMVEANLRLVISIAKKYTNRGLQFLDLIQEGNIGLMKAVDKFEYRRGYKFSTYATWWIRQAITRSIADQARTIRIPVHMIETINKLNRISRQILQEIGREPTPEELSERMLIPEDKIRKVLKIAKEPISMETPIGEDDDSHLGDFLEDTNIELPLDSATSASLRSATKNVLSGLTTREAKVLRMRFGIDMNTDHTLEEVGKQFDVTRERIRQIEAKALRKLRHPSRSEILRSFLDD</sequence>